<organism>
    <name type="scientific">Pseudomonas aeruginosa (strain ATCC 15692 / DSM 22644 / CIP 104116 / JCM 14847 / LMG 12228 / 1C / PRS 101 / PAO1)</name>
    <dbReference type="NCBI Taxonomy" id="208964"/>
    <lineage>
        <taxon>Bacteria</taxon>
        <taxon>Pseudomonadati</taxon>
        <taxon>Pseudomonadota</taxon>
        <taxon>Gammaproteobacteria</taxon>
        <taxon>Pseudomonadales</taxon>
        <taxon>Pseudomonadaceae</taxon>
        <taxon>Pseudomonas</taxon>
    </lineage>
</organism>
<protein>
    <recommendedName>
        <fullName>Secreted exoenzyme S</fullName>
    </recommendedName>
    <domain>
        <recommendedName>
            <fullName>GTPase-activating protein</fullName>
            <shortName>GAP</shortName>
        </recommendedName>
    </domain>
    <domain>
        <recommendedName>
            <fullName>ADP-ribosyltransferase</fullName>
            <shortName>ADPRT</shortName>
            <ecNumber evidence="5 9">2.4.2.31</ecNumber>
        </recommendedName>
    </domain>
</protein>
<comment type="function">
    <text evidence="3 4 5 6 7 8 9">Bifunctional effector protein that is secreted and delivered by the type III secretion system into eukaryotic target cells (PubMed:15252013). ADP-ribosylates several eukaryotic proteins including ezrin/radixin/moesin (ERM), cyclophilin A and several members of the Ras superfamily (PubMed:15252013, PubMed:9516428). Host Ras ADP-ribosylation blocks its activation by its guanine nucleotide exchange factor, thereby interfering with Ras-mediated signal transduction (PubMed:10419499). For instance, prevents Ras from interacting with and activating phosphoinositol-3-kinase (PI3K), which is required to stimulate the phagocytic NADPH-oxidase that generates reactive oxygen species (PubMed:28494242). The TR mART core domain also contributes to bacterial dissemination to the blood during pneumonia (PubMed:26090668). In addition to this activity, acts via its N-terminal region as a GTPase-activating protein (GAP) for host Rho GTPases including RhoA, Rac1, Cdc42 and Ras (PubMed:10593930). The bacterial Rho-GAP domain activity induces mitochondrial disruption in the target host cell by activating host caspases 3 and 9 that execute cellular death (PubMed:30232373).</text>
</comment>
<comment type="catalytic activity">
    <reaction evidence="5 9">
        <text>L-arginyl-[protein] + NAD(+) = N(omega)-(ADP-D-ribosyl)-L-arginyl-[protein] + nicotinamide + H(+)</text>
        <dbReference type="Rhea" id="RHEA:19149"/>
        <dbReference type="Rhea" id="RHEA-COMP:10532"/>
        <dbReference type="Rhea" id="RHEA-COMP:15087"/>
        <dbReference type="ChEBI" id="CHEBI:15378"/>
        <dbReference type="ChEBI" id="CHEBI:17154"/>
        <dbReference type="ChEBI" id="CHEBI:29965"/>
        <dbReference type="ChEBI" id="CHEBI:57540"/>
        <dbReference type="ChEBI" id="CHEBI:142554"/>
        <dbReference type="EC" id="2.4.2.31"/>
    </reaction>
</comment>
<comment type="subcellular location">
    <subcellularLocation>
        <location evidence="6">Secreted</location>
    </subcellularLocation>
    <text evidence="10">Secreted via type III secretion system (T3SS) and delivered into the host cytoplasm.</text>
</comment>
<keyword id="KW-0002">3D-structure</keyword>
<keyword id="KW-0328">Glycosyltransferase</keyword>
<keyword id="KW-0343">GTPase activation</keyword>
<keyword id="KW-0548">Nucleotidyltransferase</keyword>
<keyword id="KW-1185">Reference proteome</keyword>
<keyword id="KW-0964">Secreted</keyword>
<keyword id="KW-0800">Toxin</keyword>
<keyword id="KW-0808">Transferase</keyword>
<keyword id="KW-0843">Virulence</keyword>
<accession>G3XDA1</accession>
<feature type="chain" id="PRO_0000451079" description="Secreted exoenzyme S">
    <location>
        <begin position="1"/>
        <end position="453"/>
    </location>
</feature>
<feature type="domain" description="Bacterial Rho-GAP" evidence="2 4 5">
    <location>
        <begin position="96"/>
        <end position="229"/>
    </location>
</feature>
<feature type="domain" description="TR mART core" evidence="1 5">
    <location>
        <begin position="239"/>
        <end position="414"/>
    </location>
</feature>
<feature type="active site" evidence="1">
    <location>
        <position position="319"/>
    </location>
</feature>
<feature type="active site" evidence="1">
    <location>
        <position position="343"/>
    </location>
</feature>
<feature type="active site" evidence="1">
    <location>
        <position position="381"/>
    </location>
</feature>
<feature type="site" description="Arginine finger; crucial for GTP hydrolysis by stabilizing the transition state" evidence="2">
    <location>
        <position position="146"/>
    </location>
</feature>
<feature type="mutagenesis site" description="No loss of ability to activate the GTPase activity of host RhoA." evidence="4">
    <original>R</original>
    <variation>K</variation>
    <location>
        <position position="137"/>
    </location>
</feature>
<feature type="mutagenesis site" description="Complete loss of ability to activate the GTPase activity of host RhoA." evidence="4">
    <original>R</original>
    <variation>K</variation>
    <location>
        <position position="146"/>
    </location>
</feature>
<feature type="helix" evidence="11">
    <location>
        <begin position="422"/>
        <end position="425"/>
    </location>
</feature>
<sequence length="453" mass="48302">MHIQSLQQSPSFAVELHQAASGRLGQIEARQVATPSEAQQLAQRQDAPKGEGLLARLGAALVRPFVAIMDWLGKLLGSHARTGPQPSQDAQPAVMSSAVVFKQMVLQQALPMTLKGLDKASELATLTPEGLAREHSRLASGDGALRSLSTALAGIRAGSQVEESRIQAGRLLERSIGGIALQQWGTTGGAASQLVLDASPELRREITDQLHQVMSEVALLRQAVESEVSRVSADKALADGLVKRFGADAEKYLGRQPGGIHSDAEVMALGLYTGIHYADLNRALRQGQELDAGQKLIDQGMSAAFEKSGQAEQVVKTFRGTRGGDAFNAVEEGKVGHDDGYLSTSLNPGVARSFGQGTISTVFGRSGIDVSGISNYKNEKEILYNKETDMRVLLSASDEQGVTRRVLEEAALGEQSGHSQGLLDALDLASKPERSGEVQEQDVRLRMRGLDLA</sequence>
<gene>
    <name type="primary">exoS</name>
    <name type="ordered locus">PA3841</name>
</gene>
<proteinExistence type="evidence at protein level"/>
<name>EXOS_PSEAE</name>
<dbReference type="EC" id="2.4.2.31" evidence="5 9"/>
<dbReference type="EMBL" id="AE004091">
    <property type="protein sequence ID" value="AAG07228.1"/>
    <property type="molecule type" value="Genomic_DNA"/>
</dbReference>
<dbReference type="PIR" id="A53735">
    <property type="entry name" value="A53735"/>
</dbReference>
<dbReference type="RefSeq" id="NP_252530.1">
    <property type="nucleotide sequence ID" value="NC_002516.2"/>
</dbReference>
<dbReference type="RefSeq" id="WP_003113791.1">
    <property type="nucleotide sequence ID" value="NZ_QZGE01000001.1"/>
</dbReference>
<dbReference type="PDB" id="6Y7T">
    <property type="method" value="X-ray"/>
    <property type="resolution" value="2.50 A"/>
    <property type="chains" value="D/E=420-430"/>
</dbReference>
<dbReference type="PDBsum" id="6Y7T"/>
<dbReference type="SMR" id="G3XDA1"/>
<dbReference type="STRING" id="208964.PA3841"/>
<dbReference type="PaxDb" id="208964-PA3841"/>
<dbReference type="GeneID" id="879837"/>
<dbReference type="KEGG" id="pae:PA3841"/>
<dbReference type="PATRIC" id="fig|208964.12.peg.4021"/>
<dbReference type="PseudoCAP" id="PA3841"/>
<dbReference type="HOGENOM" id="CLU_603900_0_0_6"/>
<dbReference type="InParanoid" id="G3XDA1"/>
<dbReference type="OrthoDB" id="5918307at2"/>
<dbReference type="BioCyc" id="PAER208964:G1FZ6-3913-MONOMER"/>
<dbReference type="PHI-base" id="PHI:11503"/>
<dbReference type="PHI-base" id="PHI:12238"/>
<dbReference type="Proteomes" id="UP000002438">
    <property type="component" value="Chromosome"/>
</dbReference>
<dbReference type="GO" id="GO:0005576">
    <property type="term" value="C:extracellular region"/>
    <property type="evidence" value="ECO:0007669"/>
    <property type="project" value="UniProtKB-SubCell"/>
</dbReference>
<dbReference type="GO" id="GO:0005096">
    <property type="term" value="F:GTPase activator activity"/>
    <property type="evidence" value="ECO:0007669"/>
    <property type="project" value="InterPro"/>
</dbReference>
<dbReference type="GO" id="GO:0106274">
    <property type="term" value="F:NAD+-protein-arginine ADP-ribosyltransferase activity"/>
    <property type="evidence" value="ECO:0007669"/>
    <property type="project" value="UniProtKB-EC"/>
</dbReference>
<dbReference type="GO" id="GO:0016779">
    <property type="term" value="F:nucleotidyltransferase activity"/>
    <property type="evidence" value="ECO:0007669"/>
    <property type="project" value="UniProtKB-KW"/>
</dbReference>
<dbReference type="GO" id="GO:0090729">
    <property type="term" value="F:toxin activity"/>
    <property type="evidence" value="ECO:0007669"/>
    <property type="project" value="UniProtKB-KW"/>
</dbReference>
<dbReference type="CDD" id="cd00219">
    <property type="entry name" value="ToxGAP"/>
    <property type="match status" value="1"/>
</dbReference>
<dbReference type="Gene3D" id="6.10.250.2690">
    <property type="match status" value="1"/>
</dbReference>
<dbReference type="Gene3D" id="3.90.176.10">
    <property type="entry name" value="Toxin ADP-ribosyltransferase, Chain A, domain 1"/>
    <property type="match status" value="1"/>
</dbReference>
<dbReference type="Gene3D" id="1.20.120.260">
    <property type="entry name" value="Virulence factor YopE uncharacterised domain"/>
    <property type="match status" value="1"/>
</dbReference>
<dbReference type="InterPro" id="IPR003540">
    <property type="entry name" value="ADP-ribosyltransferase"/>
</dbReference>
<dbReference type="InterPro" id="IPR050999">
    <property type="entry name" value="ADP-ribosyltransferase_ARG"/>
</dbReference>
<dbReference type="InterPro" id="IPR003537">
    <property type="entry name" value="YopE-like"/>
</dbReference>
<dbReference type="InterPro" id="IPR014773">
    <property type="entry name" value="YopE_GAP_dom"/>
</dbReference>
<dbReference type="InterPro" id="IPR037168">
    <property type="entry name" value="YopE_GAP_dom_sf"/>
</dbReference>
<dbReference type="PANTHER" id="PTHR10339">
    <property type="entry name" value="ADP-RIBOSYLTRANSFERASE"/>
    <property type="match status" value="1"/>
</dbReference>
<dbReference type="PANTHER" id="PTHR10339:SF25">
    <property type="entry name" value="SECRETED EXOENZYME S"/>
    <property type="match status" value="1"/>
</dbReference>
<dbReference type="Pfam" id="PF03496">
    <property type="entry name" value="ADPrib_exo_Tox"/>
    <property type="match status" value="1"/>
</dbReference>
<dbReference type="Pfam" id="PF03545">
    <property type="entry name" value="YopE"/>
    <property type="match status" value="1"/>
</dbReference>
<dbReference type="PRINTS" id="PR01372">
    <property type="entry name" value="YERSINIAYOPE"/>
</dbReference>
<dbReference type="SUPFAM" id="SSF56399">
    <property type="entry name" value="ADP-ribosylation"/>
    <property type="match status" value="1"/>
</dbReference>
<dbReference type="SUPFAM" id="SSF47233">
    <property type="entry name" value="Bacterial GAP domain"/>
    <property type="match status" value="1"/>
</dbReference>
<dbReference type="PROSITE" id="PS52059">
    <property type="entry name" value="BACT_RHOGAP"/>
    <property type="match status" value="1"/>
</dbReference>
<dbReference type="PROSITE" id="PS51996">
    <property type="entry name" value="TR_MART"/>
    <property type="match status" value="1"/>
</dbReference>
<evidence type="ECO:0000255" key="1">
    <source>
        <dbReference type="PROSITE-ProRule" id="PRU01340"/>
    </source>
</evidence>
<evidence type="ECO:0000255" key="2">
    <source>
        <dbReference type="PROSITE-ProRule" id="PRU01404"/>
    </source>
</evidence>
<evidence type="ECO:0000269" key="3">
    <source>
    </source>
</evidence>
<evidence type="ECO:0000269" key="4">
    <source>
    </source>
</evidence>
<evidence type="ECO:0000269" key="5">
    <source>
    </source>
</evidence>
<evidence type="ECO:0000269" key="6">
    <source>
    </source>
</evidence>
<evidence type="ECO:0000269" key="7">
    <source>
    </source>
</evidence>
<evidence type="ECO:0000269" key="8">
    <source>
    </source>
</evidence>
<evidence type="ECO:0000269" key="9">
    <source>
    </source>
</evidence>
<evidence type="ECO:0000305" key="10"/>
<evidence type="ECO:0007829" key="11">
    <source>
        <dbReference type="PDB" id="6Y7T"/>
    </source>
</evidence>
<reference key="1">
    <citation type="journal article" date="2000" name="Nature">
        <title>Complete genome sequence of Pseudomonas aeruginosa PAO1, an opportunistic pathogen.</title>
        <authorList>
            <person name="Stover C.K."/>
            <person name="Pham X.-Q.T."/>
            <person name="Erwin A.L."/>
            <person name="Mizoguchi S.D."/>
            <person name="Warrener P."/>
            <person name="Hickey M.J."/>
            <person name="Brinkman F.S.L."/>
            <person name="Hufnagle W.O."/>
            <person name="Kowalik D.J."/>
            <person name="Lagrou M."/>
            <person name="Garber R.L."/>
            <person name="Goltry L."/>
            <person name="Tolentino E."/>
            <person name="Westbrock-Wadman S."/>
            <person name="Yuan Y."/>
            <person name="Brody L.L."/>
            <person name="Coulter S.N."/>
            <person name="Folger K.R."/>
            <person name="Kas A."/>
            <person name="Larbig K."/>
            <person name="Lim R.M."/>
            <person name="Smith K.A."/>
            <person name="Spencer D.H."/>
            <person name="Wong G.K.-S."/>
            <person name="Wu Z."/>
            <person name="Paulsen I.T."/>
            <person name="Reizer J."/>
            <person name="Saier M.H. Jr."/>
            <person name="Hancock R.E.W."/>
            <person name="Lory S."/>
            <person name="Olson M.V."/>
        </authorList>
    </citation>
    <scope>NUCLEOTIDE SEQUENCE [LARGE SCALE GENOMIC DNA]</scope>
    <source>
        <strain>ATCC 15692 / DSM 22644 / CIP 104116 / JCM 14847 / LMG 12228 / 1C / PRS 101 / PAO1</strain>
    </source>
</reference>
<reference key="2">
    <citation type="journal article" date="1998" name="J. Biol. Chem.">
        <title>Pseudomonas aeruginosa exoenzyme S ADP-ribosylates Ras at multiple sites.</title>
        <authorList>
            <person name="Ganesan A.K."/>
            <person name="Frank D.W."/>
            <person name="Misra R.P."/>
            <person name="Schmidt G."/>
            <person name="Barbieri J.T."/>
        </authorList>
    </citation>
    <scope>FUNCTION</scope>
    <scope>CATALYTIC ACTIVITY</scope>
    <source>
        <strain>PA103</strain>
    </source>
</reference>
<reference key="3">
    <citation type="journal article" date="1999" name="J. Biol. Chem.">
        <title>Pseudomonas aeruginosa exoenzyme S disrupts Ras-mediated signal transduction by inhibiting guanine nucleotide exchange factor-catalyzed nucleotide exchange.</title>
        <authorList>
            <person name="Ganesan A.K."/>
            <person name="Vincent T.S."/>
            <person name="Olson J.C."/>
            <person name="Barbieri J.T."/>
        </authorList>
    </citation>
    <scope>FUNCTION</scope>
    <source>
        <strain>PA103</strain>
    </source>
</reference>
<reference key="4">
    <citation type="journal article" date="1999" name="J. Biol. Chem.">
        <title>The N-terminal domain of Pseudomonas aeruginosa exoenzyme S is a GTPase-activating protein for Rho GTPases.</title>
        <authorList>
            <person name="Goehring U.M."/>
            <person name="Schmidt G."/>
            <person name="Pederson K.J."/>
            <person name="Aktories K."/>
            <person name="Barbieri J.T."/>
        </authorList>
    </citation>
    <scope>FUNCTION</scope>
    <scope>MUTAGENESIS OF ARG-137 AND ARG-146</scope>
    <scope>DOMAIN</scope>
    <source>
        <strain>PA103</strain>
    </source>
</reference>
<reference key="5">
    <citation type="journal article" date="2004" name="J. Biol. Chem.">
        <title>Ezrin/radixin/moesin proteins are high affinity targets for ADP-ribosylation by Pseudomonas aeruginosa ExoS.</title>
        <authorList>
            <person name="Maresso A.W."/>
            <person name="Baldwin M.R."/>
            <person name="Barbieri J.T."/>
        </authorList>
    </citation>
    <scope>FUNCTION</scope>
    <scope>CATALYTIC ACTIVITY</scope>
    <scope>DOMAIN</scope>
</reference>
<reference key="6">
    <citation type="journal article" date="2015" name="PLoS Pathog.">
        <title>The Role of ExoS in Dissemination of Pseudomonas aeruginosa during Pneumonia.</title>
        <authorList>
            <person name="Rangel S.M."/>
            <person name="Diaz M.H."/>
            <person name="Knoten C.A."/>
            <person name="Zhang A."/>
            <person name="Hauser A.R."/>
        </authorList>
    </citation>
    <scope>FUNCTION</scope>
    <scope>SUBCELLULAR LOCATION</scope>
    <source>
        <strain>PA99</strain>
    </source>
</reference>
<reference key="7">
    <citation type="journal article" date="2017" name="Cell Host Microbe">
        <title>Pseudomonas aeruginosa Effector ExoS Inhibits ROS Production in Human Neutrophils.</title>
        <authorList>
            <person name="Vareechon C."/>
            <person name="Zmina S.E."/>
            <person name="Karmakar M."/>
            <person name="Pearlman E."/>
            <person name="Rietsch A."/>
        </authorList>
    </citation>
    <scope>FUNCTION</scope>
</reference>
<reference key="8">
    <citation type="journal article" date="2018" name="Sci. Rep.">
        <title>Pseudomonas aeruginosa ExoS Induces Intrinsic Apoptosis in Target Host Cells in a Manner That is Dependent on its GAP Domain Activity.</title>
        <authorList>
            <person name="Kaminski A."/>
            <person name="Gupta K.H."/>
            <person name="Goldufsky J.W."/>
            <person name="Lee H.W."/>
            <person name="Gupta V."/>
            <person name="Shafikhani S.H."/>
        </authorList>
    </citation>
    <scope>FUNCTION</scope>
    <source>
        <strain>PA103</strain>
    </source>
</reference>